<organism>
    <name type="scientific">Lactococcus lactis subsp. cremoris</name>
    <name type="common">Streptococcus cremoris</name>
    <dbReference type="NCBI Taxonomy" id="1359"/>
    <lineage>
        <taxon>Bacteria</taxon>
        <taxon>Bacillati</taxon>
        <taxon>Bacillota</taxon>
        <taxon>Bacilli</taxon>
        <taxon>Lactobacillales</taxon>
        <taxon>Streptococcaceae</taxon>
        <taxon>Lactococcus</taxon>
    </lineage>
</organism>
<protein>
    <recommendedName>
        <fullName evidence="4">Type II methyltransferase M2.ScrFI</fullName>
        <shortName evidence="4">M2.ScrFI</shortName>
        <ecNumber>2.1.1.37</ecNumber>
    </recommendedName>
    <alternativeName>
        <fullName>Cytosine-specific methyltransferase ScrFIB</fullName>
    </alternativeName>
    <alternativeName>
        <fullName>Modification methylase ScrFIB</fullName>
        <shortName evidence="5">M.ScrFI-B</shortName>
        <shortName>M.ScrFIB</shortName>
    </alternativeName>
</protein>
<comment type="function">
    <text evidence="4 6">A methylase, recognizes the double-stranded sequence 5'-CCNGG-3', methylates C-2 on both strands, and protects the DNA from cleavage by the ScrFI endonuclease.</text>
</comment>
<comment type="catalytic activity">
    <reaction evidence="2">
        <text>a 2'-deoxycytidine in DNA + S-adenosyl-L-methionine = a 5-methyl-2'-deoxycytidine in DNA + S-adenosyl-L-homocysteine + H(+)</text>
        <dbReference type="Rhea" id="RHEA:13681"/>
        <dbReference type="Rhea" id="RHEA-COMP:11369"/>
        <dbReference type="Rhea" id="RHEA-COMP:11370"/>
        <dbReference type="ChEBI" id="CHEBI:15378"/>
        <dbReference type="ChEBI" id="CHEBI:57856"/>
        <dbReference type="ChEBI" id="CHEBI:59789"/>
        <dbReference type="ChEBI" id="CHEBI:85452"/>
        <dbReference type="ChEBI" id="CHEBI:85454"/>
        <dbReference type="EC" id="2.1.1.37"/>
    </reaction>
</comment>
<comment type="miscellaneous">
    <text evidence="3">The ScrFI restriction system has two different methylases.</text>
</comment>
<comment type="similarity">
    <text evidence="1">Belongs to the class I-like SAM-binding methyltransferase superfamily. C5-methyltransferase family.</text>
</comment>
<sequence>MLRVFEAFAGYGSQRLALIKANIPHEIVGISEIEGDVLLSYSAIHENLLEERNKNIKLTDDEMRDYLKNINIPLDYKTFENRADKLGGQKLKDMYIANKLNKNFGDIRSIDPKKLPDFDFFTYSFPCQDISVAGYQNGLVADSGTRSSLLWECCKIIEHKKPKYLMMENVKNLVGKNHKVNFNKFLLYLESLGYTNYWDILNARDFGIPQNRERVFCISILNPNEDFTFPQKQNLTLSMNDLLEENVSEKFYLKNNQVSDEPILQDYIYCLDSNYWKGTFLKDFLSKKRRQLVSGKVRPDGKYPARRLTPRETWRFMGVEDTNFDKASILVSNTSLYKQSGNSIVVPVLESLFKELFKSQ</sequence>
<dbReference type="EC" id="2.1.1.37"/>
<dbReference type="EMBL" id="L12227">
    <property type="protein sequence ID" value="AAA16838.1"/>
    <property type="molecule type" value="Unassigned_DNA"/>
</dbReference>
<dbReference type="EMBL" id="U89998">
    <property type="protein sequence ID" value="AAB66694.1"/>
    <property type="molecule type" value="Genomic_DNA"/>
</dbReference>
<dbReference type="RefSeq" id="WP_015081858.1">
    <property type="nucleotide sequence ID" value="NZ_CP128421.1"/>
</dbReference>
<dbReference type="SMR" id="P34878"/>
<dbReference type="REBASE" id="3682">
    <property type="entry name" value="M2.ScrFI"/>
</dbReference>
<dbReference type="PRO" id="PR:P34878"/>
<dbReference type="GO" id="GO:0003886">
    <property type="term" value="F:DNA (cytosine-5-)-methyltransferase activity"/>
    <property type="evidence" value="ECO:0007669"/>
    <property type="project" value="UniProtKB-EC"/>
</dbReference>
<dbReference type="GO" id="GO:0003677">
    <property type="term" value="F:DNA binding"/>
    <property type="evidence" value="ECO:0007669"/>
    <property type="project" value="UniProtKB-KW"/>
</dbReference>
<dbReference type="GO" id="GO:0009307">
    <property type="term" value="P:DNA restriction-modification system"/>
    <property type="evidence" value="ECO:0007669"/>
    <property type="project" value="UniProtKB-KW"/>
</dbReference>
<dbReference type="GO" id="GO:0032259">
    <property type="term" value="P:methylation"/>
    <property type="evidence" value="ECO:0007669"/>
    <property type="project" value="UniProtKB-KW"/>
</dbReference>
<dbReference type="CDD" id="cd00315">
    <property type="entry name" value="Cyt_C5_DNA_methylase"/>
    <property type="match status" value="1"/>
</dbReference>
<dbReference type="Gene3D" id="3.90.120.10">
    <property type="entry name" value="DNA Methylase, subunit A, domain 2"/>
    <property type="match status" value="1"/>
</dbReference>
<dbReference type="Gene3D" id="3.40.50.150">
    <property type="entry name" value="Vaccinia Virus protein VP39"/>
    <property type="match status" value="1"/>
</dbReference>
<dbReference type="InterPro" id="IPR050750">
    <property type="entry name" value="C5-MTase"/>
</dbReference>
<dbReference type="InterPro" id="IPR018117">
    <property type="entry name" value="C5_DNA_meth_AS"/>
</dbReference>
<dbReference type="InterPro" id="IPR001525">
    <property type="entry name" value="C5_MeTfrase"/>
</dbReference>
<dbReference type="InterPro" id="IPR031303">
    <property type="entry name" value="C5_meth_CS"/>
</dbReference>
<dbReference type="InterPro" id="IPR029063">
    <property type="entry name" value="SAM-dependent_MTases_sf"/>
</dbReference>
<dbReference type="NCBIfam" id="TIGR00675">
    <property type="entry name" value="dcm"/>
    <property type="match status" value="1"/>
</dbReference>
<dbReference type="PANTHER" id="PTHR46098">
    <property type="entry name" value="TRNA (CYTOSINE(38)-C(5))-METHYLTRANSFERASE"/>
    <property type="match status" value="1"/>
</dbReference>
<dbReference type="PANTHER" id="PTHR46098:SF1">
    <property type="entry name" value="TRNA (CYTOSINE(38)-C(5))-METHYLTRANSFERASE"/>
    <property type="match status" value="1"/>
</dbReference>
<dbReference type="Pfam" id="PF00145">
    <property type="entry name" value="DNA_methylase"/>
    <property type="match status" value="1"/>
</dbReference>
<dbReference type="PRINTS" id="PR00105">
    <property type="entry name" value="C5METTRFRASE"/>
</dbReference>
<dbReference type="SUPFAM" id="SSF53335">
    <property type="entry name" value="S-adenosyl-L-methionine-dependent methyltransferases"/>
    <property type="match status" value="1"/>
</dbReference>
<dbReference type="PROSITE" id="PS00094">
    <property type="entry name" value="C5_MTASE_1"/>
    <property type="match status" value="1"/>
</dbReference>
<dbReference type="PROSITE" id="PS00095">
    <property type="entry name" value="C5_MTASE_2"/>
    <property type="match status" value="1"/>
</dbReference>
<dbReference type="PROSITE" id="PS51679">
    <property type="entry name" value="SAM_MT_C5"/>
    <property type="match status" value="1"/>
</dbReference>
<accession>P34878</accession>
<evidence type="ECO:0000255" key="1">
    <source>
        <dbReference type="PROSITE-ProRule" id="PRU01016"/>
    </source>
</evidence>
<evidence type="ECO:0000255" key="2">
    <source>
        <dbReference type="PROSITE-ProRule" id="PRU10018"/>
    </source>
</evidence>
<evidence type="ECO:0000269" key="3">
    <source>
    </source>
</evidence>
<evidence type="ECO:0000303" key="4">
    <source>
    </source>
</evidence>
<evidence type="ECO:0000303" key="5">
    <source ref="1"/>
</evidence>
<evidence type="ECO:0000305" key="6">
    <source ref="1"/>
</evidence>
<proteinExistence type="inferred from homology"/>
<name>MTSB_LACLC</name>
<feature type="chain" id="PRO_0000087893" description="Type II methyltransferase M2.ScrFI">
    <location>
        <begin position="1"/>
        <end position="360"/>
    </location>
</feature>
<feature type="domain" description="SAM-dependent MTase C5-type" evidence="1">
    <location>
        <begin position="2"/>
        <end position="360"/>
    </location>
</feature>
<feature type="active site" evidence="1 2">
    <location>
        <position position="127"/>
    </location>
</feature>
<gene>
    <name type="primary">scrFIBM</name>
</gene>
<reference key="1">
    <citation type="journal article" date="1993" name="Gene">
        <title>Sequence of the gene encoding a second ScrFI m5C methyltransferase of Lactococcus lactis.</title>
        <authorList>
            <person name="Twomey D.P."/>
            <person name="Davis R."/>
            <person name="Daly C."/>
            <person name="Fitzgerald G.F."/>
        </authorList>
    </citation>
    <scope>NUCLEOTIDE SEQUENCE [GENOMIC DNA]</scope>
    <scope>FUNCTION</scope>
    <source>
        <strain>UC503</strain>
    </source>
</reference>
<reference key="2">
    <citation type="journal article" date="2003" name="Nucleic Acids Res.">
        <title>A nomenclature for restriction enzymes, DNA methyltransferases, homing endonucleases and their genes.</title>
        <authorList>
            <person name="Roberts R.J."/>
            <person name="Belfort M."/>
            <person name="Bestor T."/>
            <person name="Bhagwat A.S."/>
            <person name="Bickle T.A."/>
            <person name="Bitinaite J."/>
            <person name="Blumenthal R.M."/>
            <person name="Degtyarev S.K."/>
            <person name="Dryden D.T."/>
            <person name="Dybvig K."/>
            <person name="Firman K."/>
            <person name="Gromova E.S."/>
            <person name="Gumport R.I."/>
            <person name="Halford S.E."/>
            <person name="Hattman S."/>
            <person name="Heitman J."/>
            <person name="Hornby D.P."/>
            <person name="Janulaitis A."/>
            <person name="Jeltsch A."/>
            <person name="Josephsen J."/>
            <person name="Kiss A."/>
            <person name="Klaenhammer T.R."/>
            <person name="Kobayashi I."/>
            <person name="Kong H."/>
            <person name="Krueger D.H."/>
            <person name="Lacks S."/>
            <person name="Marinus M.G."/>
            <person name="Miyahara M."/>
            <person name="Morgan R.D."/>
            <person name="Murray N.E."/>
            <person name="Nagaraja V."/>
            <person name="Piekarowicz A."/>
            <person name="Pingoud A."/>
            <person name="Raleigh E."/>
            <person name="Rao D.N."/>
            <person name="Reich N."/>
            <person name="Repin V.E."/>
            <person name="Selker E.U."/>
            <person name="Shaw P.C."/>
            <person name="Stein D.C."/>
            <person name="Stoddard B.L."/>
            <person name="Szybalski W."/>
            <person name="Trautner T.A."/>
            <person name="Van Etten J.L."/>
            <person name="Vitor J.M."/>
            <person name="Wilson G.G."/>
            <person name="Xu S.Y."/>
        </authorList>
    </citation>
    <scope>NOMENCLATURE</scope>
</reference>
<keyword id="KW-0238">DNA-binding</keyword>
<keyword id="KW-0489">Methyltransferase</keyword>
<keyword id="KW-0680">Restriction system</keyword>
<keyword id="KW-0949">S-adenosyl-L-methionine</keyword>
<keyword id="KW-0808">Transferase</keyword>